<keyword id="KW-0903">Direct protein sequencing</keyword>
<keyword id="KW-0588">Pheromone</keyword>
<dbReference type="GO" id="GO:0005186">
    <property type="term" value="F:pheromone activity"/>
    <property type="evidence" value="ECO:0007669"/>
    <property type="project" value="UniProtKB-KW"/>
</dbReference>
<reference key="1">
    <citation type="journal article" date="1984" name="FEBS Lett.">
        <title>Isolation and structure of the bacterial sex pheromone, cAD1, that induces plasmid transfer in Streptococcus faecalis.</title>
        <authorList>
            <person name="Mori M."/>
            <person name="Sagakami Y."/>
            <person name="Narita M."/>
            <person name="Isogai A."/>
            <person name="Fujino M."/>
            <person name="Kitada C."/>
            <person name="Craig R.A."/>
            <person name="Clewell D.B."/>
            <person name="Suzuki A."/>
        </authorList>
    </citation>
    <scope>PROTEIN SEQUENCE</scope>
</reference>
<protein>
    <recommendedName>
        <fullName>Sex pheromone CAD1</fullName>
    </recommendedName>
</protein>
<proteinExistence type="evidence at protein level"/>
<name>CAD1_ENTFL</name>
<accession>P13268</accession>
<feature type="peptide" id="PRO_0000044113" description="Sex pheromone CAD1">
    <location>
        <begin position="1"/>
        <end position="8"/>
    </location>
</feature>
<comment type="function">
    <text>Involved in the conjugative transfer of the hemolysin plasmid pAD1.</text>
</comment>
<sequence length="8" mass="819">LFSLVLAG</sequence>
<organism>
    <name type="scientific">Enterococcus faecalis</name>
    <name type="common">Streptococcus faecalis</name>
    <dbReference type="NCBI Taxonomy" id="1351"/>
    <lineage>
        <taxon>Bacteria</taxon>
        <taxon>Bacillati</taxon>
        <taxon>Bacillota</taxon>
        <taxon>Bacilli</taxon>
        <taxon>Lactobacillales</taxon>
        <taxon>Enterococcaceae</taxon>
        <taxon>Enterococcus</taxon>
    </lineage>
</organism>